<proteinExistence type="evidence at protein level"/>
<gene>
    <name type="primary">LIMS2</name>
    <name type="synonym">PINCH2</name>
</gene>
<protein>
    <recommendedName>
        <fullName>LIM and senescent cell antigen-like-containing domain protein 2</fullName>
    </recommendedName>
    <alternativeName>
        <fullName>LIM-like protein 2</fullName>
    </alternativeName>
    <alternativeName>
        <fullName>Particularly interesting new Cys-His protein 2</fullName>
        <shortName>PINCH-2</shortName>
    </alternativeName>
</protein>
<sequence length="341" mass="38916">MTGSNMSDALANAVCQRCQARFSPAERIVNSNGELYHEHCFVCAQCFRPFPEGLFYEFEGRKYCEHDFQMLFAPCCGSCGEFIIGRVIKAMNNNWHPGCFRCELCDVELADLGFVKNAGRHLCRPCHNREKAKGLGKYICQRCHLVIDEQPLMFRSDAYHPDHFNCTHCGKELTAEARELKGELYCLPCHDKMGVPICGACRRPIEGRVVNALGKQWHVEHFVCAKCEKPFLGHRHYEKKGLAYCETHYNQLFGDVCYNCSHVIEGDVVSALNKAWCVSCFSCSTCNSKLTLKNKFVEFDMKPVCKRCYEKFPLELKKRLKKLSELTSRKAQPKATDLNSA</sequence>
<dbReference type="EMBL" id="AF484961">
    <property type="protein sequence ID" value="AAM97589.1"/>
    <property type="molecule type" value="mRNA"/>
</dbReference>
<dbReference type="EMBL" id="AF520987">
    <property type="protein sequence ID" value="AAM77350.1"/>
    <property type="status" value="ALT_FRAME"/>
    <property type="molecule type" value="mRNA"/>
</dbReference>
<dbReference type="EMBL" id="AF527764">
    <property type="protein sequence ID" value="AAQ09011.1"/>
    <property type="molecule type" value="mRNA"/>
</dbReference>
<dbReference type="EMBL" id="AF527765">
    <property type="protein sequence ID" value="AAQ09012.1"/>
    <property type="molecule type" value="mRNA"/>
</dbReference>
<dbReference type="EMBL" id="AF527766">
    <property type="protein sequence ID" value="AAQ09013.1"/>
    <property type="molecule type" value="mRNA"/>
</dbReference>
<dbReference type="EMBL" id="AF527770">
    <property type="protein sequence ID" value="AAQ09017.1"/>
    <property type="molecule type" value="mRNA"/>
</dbReference>
<dbReference type="EMBL" id="AK022470">
    <property type="protein sequence ID" value="BAB14047.1"/>
    <property type="molecule type" value="mRNA"/>
</dbReference>
<dbReference type="EMBL" id="AK297645">
    <property type="protein sequence ID" value="BAG60013.1"/>
    <property type="molecule type" value="mRNA"/>
</dbReference>
<dbReference type="EMBL" id="BX458594">
    <property type="status" value="NOT_ANNOTATED_CDS"/>
    <property type="molecule type" value="mRNA"/>
</dbReference>
<dbReference type="EMBL" id="AC010976">
    <property type="status" value="NOT_ANNOTATED_CDS"/>
    <property type="molecule type" value="Genomic_DNA"/>
</dbReference>
<dbReference type="EMBL" id="AC074114">
    <property type="status" value="NOT_ANNOTATED_CDS"/>
    <property type="molecule type" value="Genomic_DNA"/>
</dbReference>
<dbReference type="EMBL" id="BC065816">
    <property type="protein sequence ID" value="AAH65816.1"/>
    <property type="molecule type" value="mRNA"/>
</dbReference>
<dbReference type="CCDS" id="CCDS2147.1">
    <molecule id="Q7Z4I7-2"/>
</dbReference>
<dbReference type="CCDS" id="CCDS54394.1">
    <molecule id="Q7Z4I7-3"/>
</dbReference>
<dbReference type="CCDS" id="CCDS54395.1">
    <molecule id="Q7Z4I7-1"/>
</dbReference>
<dbReference type="CCDS" id="CCDS54396.1">
    <molecule id="Q7Z4I7-5"/>
</dbReference>
<dbReference type="CCDS" id="CCDS58725.1">
    <molecule id="Q7Z4I7-4"/>
</dbReference>
<dbReference type="RefSeq" id="NP_001129509.2">
    <molecule id="Q7Z4I7-5"/>
    <property type="nucleotide sequence ID" value="NM_001136037.4"/>
</dbReference>
<dbReference type="RefSeq" id="NP_001154875.1">
    <molecule id="Q7Z4I7-1"/>
    <property type="nucleotide sequence ID" value="NM_001161403.3"/>
</dbReference>
<dbReference type="RefSeq" id="NP_001154876.1">
    <molecule id="Q7Z4I7-3"/>
    <property type="nucleotide sequence ID" value="NM_001161404.2"/>
</dbReference>
<dbReference type="RefSeq" id="NP_001243471.1">
    <molecule id="Q7Z4I7-4"/>
    <property type="nucleotide sequence ID" value="NM_001256542.2"/>
</dbReference>
<dbReference type="RefSeq" id="NP_060450.2">
    <molecule id="Q7Z4I7-2"/>
    <property type="nucleotide sequence ID" value="NM_017980.4"/>
</dbReference>
<dbReference type="RefSeq" id="XP_024308751.1">
    <molecule id="Q7Z4I7-3"/>
    <property type="nucleotide sequence ID" value="XM_024452983.2"/>
</dbReference>
<dbReference type="RefSeq" id="XP_024308753.1">
    <molecule id="Q7Z4I7-4"/>
    <property type="nucleotide sequence ID" value="XM_024452985.2"/>
</dbReference>
<dbReference type="RefSeq" id="XP_024308754.1">
    <molecule id="Q7Z4I7-4"/>
    <property type="nucleotide sequence ID" value="XM_024452986.2"/>
</dbReference>
<dbReference type="RefSeq" id="XP_047300931.1">
    <molecule id="Q7Z4I7-4"/>
    <property type="nucleotide sequence ID" value="XM_047444975.1"/>
</dbReference>
<dbReference type="RefSeq" id="XP_047300932.1">
    <molecule id="Q7Z4I7-4"/>
    <property type="nucleotide sequence ID" value="XM_047444976.1"/>
</dbReference>
<dbReference type="RefSeq" id="XP_054198870.1">
    <molecule id="Q7Z4I7-3"/>
    <property type="nucleotide sequence ID" value="XM_054342895.1"/>
</dbReference>
<dbReference type="RefSeq" id="XP_054198879.1">
    <molecule id="Q7Z4I7-4"/>
    <property type="nucleotide sequence ID" value="XM_054342904.1"/>
</dbReference>
<dbReference type="RefSeq" id="XP_054198880.1">
    <molecule id="Q7Z4I7-4"/>
    <property type="nucleotide sequence ID" value="XM_054342905.1"/>
</dbReference>
<dbReference type="PDB" id="3IXE">
    <property type="method" value="X-ray"/>
    <property type="resolution" value="1.90 A"/>
    <property type="chains" value="B=11-73"/>
</dbReference>
<dbReference type="PDBsum" id="3IXE"/>
<dbReference type="SMR" id="Q7Z4I7"/>
<dbReference type="BioGRID" id="120808">
    <property type="interactions" value="22"/>
</dbReference>
<dbReference type="ComplexPortal" id="CPX-10313">
    <property type="entry name" value="ILK-PINCH-Parvin complex, LIMS2-PARVA variant"/>
</dbReference>
<dbReference type="ComplexPortal" id="CPX-10314">
    <property type="entry name" value="ILK-PINCH-Parvin complex, LIMS2-PARVB variant"/>
</dbReference>
<dbReference type="CORUM" id="Q7Z4I7"/>
<dbReference type="FunCoup" id="Q7Z4I7">
    <property type="interactions" value="107"/>
</dbReference>
<dbReference type="IntAct" id="Q7Z4I7">
    <property type="interactions" value="20"/>
</dbReference>
<dbReference type="MINT" id="Q7Z4I7"/>
<dbReference type="STRING" id="9606.ENSP00000326888"/>
<dbReference type="GlyGen" id="Q7Z4I7">
    <property type="glycosylation" value="1 site, 1 O-linked glycan (1 site)"/>
</dbReference>
<dbReference type="iPTMnet" id="Q7Z4I7"/>
<dbReference type="PhosphoSitePlus" id="Q7Z4I7"/>
<dbReference type="BioMuta" id="LIMS2"/>
<dbReference type="DMDM" id="74750091"/>
<dbReference type="jPOST" id="Q7Z4I7"/>
<dbReference type="MassIVE" id="Q7Z4I7"/>
<dbReference type="PaxDb" id="9606-ENSP00000326888"/>
<dbReference type="PeptideAtlas" id="Q7Z4I7"/>
<dbReference type="ProteomicsDB" id="27166"/>
<dbReference type="ProteomicsDB" id="69191"/>
<dbReference type="ProteomicsDB" id="69192">
    <molecule id="Q7Z4I7-1"/>
</dbReference>
<dbReference type="ProteomicsDB" id="69193">
    <molecule id="Q7Z4I7-2"/>
</dbReference>
<dbReference type="ProteomicsDB" id="69194">
    <molecule id="Q7Z4I7-3"/>
</dbReference>
<dbReference type="Pumba" id="Q7Z4I7"/>
<dbReference type="Antibodypedia" id="55985">
    <property type="antibodies" value="148 antibodies from 22 providers"/>
</dbReference>
<dbReference type="DNASU" id="55679"/>
<dbReference type="Ensembl" id="ENST00000324938.9">
    <molecule id="Q7Z4I7-2"/>
    <property type="protein sequence ID" value="ENSP00000326888.5"/>
    <property type="gene ID" value="ENSG00000072163.20"/>
</dbReference>
<dbReference type="Ensembl" id="ENST00000355119.9">
    <molecule id="Q7Z4I7-1"/>
    <property type="protein sequence ID" value="ENSP00000347240.4"/>
    <property type="gene ID" value="ENSG00000072163.20"/>
</dbReference>
<dbReference type="Ensembl" id="ENST00000409254.1">
    <molecule id="Q7Z4I7-4"/>
    <property type="protein sequence ID" value="ENSP00000386907.1"/>
    <property type="gene ID" value="ENSG00000072163.20"/>
</dbReference>
<dbReference type="Ensembl" id="ENST00000409286.5">
    <molecule id="Q7Z4I7-4"/>
    <property type="protein sequence ID" value="ENSP00000386252.1"/>
    <property type="gene ID" value="ENSG00000072163.20"/>
</dbReference>
<dbReference type="Ensembl" id="ENST00000409455.5">
    <molecule id="Q7Z4I7-3"/>
    <property type="protein sequence ID" value="ENSP00000386383.1"/>
    <property type="gene ID" value="ENSG00000072163.20"/>
</dbReference>
<dbReference type="Ensembl" id="ENST00000409754.5">
    <molecule id="Q7Z4I7-4"/>
    <property type="protein sequence ID" value="ENSP00000386345.1"/>
    <property type="gene ID" value="ENSG00000072163.20"/>
</dbReference>
<dbReference type="Ensembl" id="ENST00000409808.6">
    <molecule id="Q7Z4I7-3"/>
    <property type="protein sequence ID" value="ENSP00000386637.2"/>
    <property type="gene ID" value="ENSG00000072163.20"/>
</dbReference>
<dbReference type="Ensembl" id="ENST00000410011.5">
    <molecule id="Q7Z4I7-3"/>
    <property type="protein sequence ID" value="ENSP00000387002.1"/>
    <property type="gene ID" value="ENSG00000072163.20"/>
</dbReference>
<dbReference type="Ensembl" id="ENST00000410038.5">
    <molecule id="Q7Z4I7-4"/>
    <property type="protein sequence ID" value="ENSP00000386570.1"/>
    <property type="gene ID" value="ENSG00000072163.20"/>
</dbReference>
<dbReference type="Ensembl" id="ENST00000545738.6">
    <molecule id="Q7Z4I7-5"/>
    <property type="protein sequence ID" value="ENSP00000443794.2"/>
    <property type="gene ID" value="ENSG00000072163.20"/>
</dbReference>
<dbReference type="GeneID" id="55679"/>
<dbReference type="KEGG" id="hsa:55679"/>
<dbReference type="MANE-Select" id="ENST00000355119.9">
    <property type="protein sequence ID" value="ENSP00000347240.4"/>
    <property type="RefSeq nucleotide sequence ID" value="NM_001161403.3"/>
    <property type="RefSeq protein sequence ID" value="NP_001154875.1"/>
</dbReference>
<dbReference type="UCSC" id="uc002tov.4">
    <molecule id="Q7Z4I7-1"/>
    <property type="organism name" value="human"/>
</dbReference>
<dbReference type="AGR" id="HGNC:16084"/>
<dbReference type="CTD" id="55679"/>
<dbReference type="DisGeNET" id="55679"/>
<dbReference type="GeneCards" id="LIMS2"/>
<dbReference type="HGNC" id="HGNC:16084">
    <property type="gene designation" value="LIMS2"/>
</dbReference>
<dbReference type="HPA" id="ENSG00000072163">
    <property type="expression patterns" value="Tissue enhanced (intestine)"/>
</dbReference>
<dbReference type="MalaCards" id="LIMS2"/>
<dbReference type="MIM" id="607908">
    <property type="type" value="gene"/>
</dbReference>
<dbReference type="MIM" id="616827">
    <property type="type" value="phenotype"/>
</dbReference>
<dbReference type="neXtProt" id="NX_Q7Z4I7"/>
<dbReference type="OpenTargets" id="ENSG00000072163"/>
<dbReference type="PharmGKB" id="PA30390"/>
<dbReference type="VEuPathDB" id="HostDB:ENSG00000072163"/>
<dbReference type="eggNOG" id="KOG2272">
    <property type="taxonomic scope" value="Eukaryota"/>
</dbReference>
<dbReference type="GeneTree" id="ENSGT00940000153518"/>
<dbReference type="HOGENOM" id="CLU_001357_0_0_1"/>
<dbReference type="InParanoid" id="Q7Z4I7"/>
<dbReference type="OMA" id="FHEHCFV"/>
<dbReference type="OrthoDB" id="20689at2759"/>
<dbReference type="PAN-GO" id="Q7Z4I7">
    <property type="GO annotations" value="7 GO annotations based on evolutionary models"/>
</dbReference>
<dbReference type="PhylomeDB" id="Q7Z4I7"/>
<dbReference type="TreeFam" id="TF314113"/>
<dbReference type="PathwayCommons" id="Q7Z4I7"/>
<dbReference type="Reactome" id="R-HSA-446353">
    <property type="pathway name" value="Cell-extracellular matrix interactions"/>
</dbReference>
<dbReference type="SignaLink" id="Q7Z4I7"/>
<dbReference type="SIGNOR" id="Q7Z4I7"/>
<dbReference type="BioGRID-ORCS" id="55679">
    <property type="hits" value="20 hits in 1148 CRISPR screens"/>
</dbReference>
<dbReference type="ChiTaRS" id="LIMS2">
    <property type="organism name" value="human"/>
</dbReference>
<dbReference type="EvolutionaryTrace" id="Q7Z4I7"/>
<dbReference type="GenomeRNAi" id="55679"/>
<dbReference type="Pharos" id="Q7Z4I7">
    <property type="development level" value="Tbio"/>
</dbReference>
<dbReference type="PRO" id="PR:Q7Z4I7"/>
<dbReference type="Proteomes" id="UP000005640">
    <property type="component" value="Chromosome 2"/>
</dbReference>
<dbReference type="RNAct" id="Q7Z4I7">
    <property type="molecule type" value="protein"/>
</dbReference>
<dbReference type="Bgee" id="ENSG00000072163">
    <property type="expression patterns" value="Expressed in apex of heart and 162 other cell types or tissues"/>
</dbReference>
<dbReference type="ExpressionAtlas" id="Q7Z4I7">
    <property type="expression patterns" value="baseline and differential"/>
</dbReference>
<dbReference type="GO" id="GO:0005911">
    <property type="term" value="C:cell-cell junction"/>
    <property type="evidence" value="ECO:0000318"/>
    <property type="project" value="GO_Central"/>
</dbReference>
<dbReference type="GO" id="GO:0005737">
    <property type="term" value="C:cytoplasm"/>
    <property type="evidence" value="ECO:0000318"/>
    <property type="project" value="GO_Central"/>
</dbReference>
<dbReference type="GO" id="GO:0005829">
    <property type="term" value="C:cytosol"/>
    <property type="evidence" value="ECO:0000304"/>
    <property type="project" value="Reactome"/>
</dbReference>
<dbReference type="GO" id="GO:0005925">
    <property type="term" value="C:focal adhesion"/>
    <property type="evidence" value="ECO:0000314"/>
    <property type="project" value="HPA"/>
</dbReference>
<dbReference type="GO" id="GO:0005634">
    <property type="term" value="C:nucleus"/>
    <property type="evidence" value="ECO:0007669"/>
    <property type="project" value="UniProtKB-SubCell"/>
</dbReference>
<dbReference type="GO" id="GO:0005886">
    <property type="term" value="C:plasma membrane"/>
    <property type="evidence" value="ECO:0007669"/>
    <property type="project" value="UniProtKB-SubCell"/>
</dbReference>
<dbReference type="GO" id="GO:0046872">
    <property type="term" value="F:metal ion binding"/>
    <property type="evidence" value="ECO:0007669"/>
    <property type="project" value="UniProtKB-KW"/>
</dbReference>
<dbReference type="GO" id="GO:0098609">
    <property type="term" value="P:cell-cell adhesion"/>
    <property type="evidence" value="ECO:0000318"/>
    <property type="project" value="GO_Central"/>
</dbReference>
<dbReference type="GO" id="GO:0045216">
    <property type="term" value="P:cell-cell junction organization"/>
    <property type="evidence" value="ECO:0000318"/>
    <property type="project" value="GO_Central"/>
</dbReference>
<dbReference type="GO" id="GO:1990705">
    <property type="term" value="P:cholangiocyte proliferation"/>
    <property type="evidence" value="ECO:0007669"/>
    <property type="project" value="Ensembl"/>
</dbReference>
<dbReference type="GO" id="GO:0007229">
    <property type="term" value="P:integrin-mediated signaling pathway"/>
    <property type="evidence" value="ECO:0007669"/>
    <property type="project" value="Ensembl"/>
</dbReference>
<dbReference type="GO" id="GO:0043066">
    <property type="term" value="P:negative regulation of apoptotic process"/>
    <property type="evidence" value="ECO:0007669"/>
    <property type="project" value="Ensembl"/>
</dbReference>
<dbReference type="GO" id="GO:1904055">
    <property type="term" value="P:negative regulation of cholangiocyte proliferation"/>
    <property type="evidence" value="ECO:0007669"/>
    <property type="project" value="Ensembl"/>
</dbReference>
<dbReference type="GO" id="GO:2000346">
    <property type="term" value="P:negative regulation of hepatocyte proliferation"/>
    <property type="evidence" value="ECO:0007669"/>
    <property type="project" value="Ensembl"/>
</dbReference>
<dbReference type="GO" id="GO:2000178">
    <property type="term" value="P:negative regulation of neural precursor cell proliferation"/>
    <property type="evidence" value="ECO:0007669"/>
    <property type="project" value="Ensembl"/>
</dbReference>
<dbReference type="GO" id="GO:0061351">
    <property type="term" value="P:neural precursor cell proliferation"/>
    <property type="evidence" value="ECO:0007669"/>
    <property type="project" value="Ensembl"/>
</dbReference>
<dbReference type="GO" id="GO:2001046">
    <property type="term" value="P:positive regulation of integrin-mediated signaling pathway"/>
    <property type="evidence" value="ECO:0000318"/>
    <property type="project" value="GO_Central"/>
</dbReference>
<dbReference type="GO" id="GO:1900026">
    <property type="term" value="P:positive regulation of substrate adhesion-dependent cell spreading"/>
    <property type="evidence" value="ECO:0000318"/>
    <property type="project" value="GO_Central"/>
</dbReference>
<dbReference type="CDD" id="cd09331">
    <property type="entry name" value="LIM1_PINCH"/>
    <property type="match status" value="1"/>
</dbReference>
<dbReference type="CDD" id="cd09332">
    <property type="entry name" value="LIM2_PINCH"/>
    <property type="match status" value="1"/>
</dbReference>
<dbReference type="CDD" id="cd09333">
    <property type="entry name" value="LIM3_PINCH"/>
    <property type="match status" value="1"/>
</dbReference>
<dbReference type="CDD" id="cd09334">
    <property type="entry name" value="LIM4_PINCH"/>
    <property type="match status" value="1"/>
</dbReference>
<dbReference type="CDD" id="cd09335">
    <property type="entry name" value="LIM5_PINCH"/>
    <property type="match status" value="1"/>
</dbReference>
<dbReference type="FunFam" id="2.10.110.10:FF:000011">
    <property type="entry name" value="Lim and senescent cell antigen-like-containing"/>
    <property type="match status" value="1"/>
</dbReference>
<dbReference type="FunFam" id="2.10.110.10:FF:000017">
    <property type="entry name" value="Lim and senescent cell antigen-like-containing"/>
    <property type="match status" value="1"/>
</dbReference>
<dbReference type="FunFam" id="2.10.110.10:FF:000019">
    <property type="entry name" value="Lim and senescent cell antigen-like-containing"/>
    <property type="match status" value="1"/>
</dbReference>
<dbReference type="FunFam" id="2.10.110.10:FF:000021">
    <property type="entry name" value="Lim and senescent cell antigen-like-containing"/>
    <property type="match status" value="1"/>
</dbReference>
<dbReference type="FunFam" id="2.10.110.10:FF:000029">
    <property type="entry name" value="LIM and senescent cell antigen-like-containing domain protein"/>
    <property type="match status" value="1"/>
</dbReference>
<dbReference type="Gene3D" id="2.10.110.10">
    <property type="entry name" value="Cysteine Rich Protein"/>
    <property type="match status" value="5"/>
</dbReference>
<dbReference type="InterPro" id="IPR047944">
    <property type="entry name" value="LIMS1/2-like_LIM1"/>
</dbReference>
<dbReference type="InterPro" id="IPR017351">
    <property type="entry name" value="PINCH-1-4-like"/>
</dbReference>
<dbReference type="InterPro" id="IPR047946">
    <property type="entry name" value="PINCH-1/2-like"/>
</dbReference>
<dbReference type="InterPro" id="IPR001781">
    <property type="entry name" value="Znf_LIM"/>
</dbReference>
<dbReference type="PANTHER" id="PTHR24210:SF10">
    <property type="entry name" value="LIM AND SENESCENT CELL ANTIGEN-LIKE-CONTAINING DOMAIN PROTEIN 2"/>
    <property type="match status" value="1"/>
</dbReference>
<dbReference type="PANTHER" id="PTHR24210">
    <property type="entry name" value="LIM DOMAIN-CONTAINING PROTEIN"/>
    <property type="match status" value="1"/>
</dbReference>
<dbReference type="Pfam" id="PF00412">
    <property type="entry name" value="LIM"/>
    <property type="match status" value="5"/>
</dbReference>
<dbReference type="PIRSF" id="PIRSF038003">
    <property type="entry name" value="PINCH"/>
    <property type="match status" value="1"/>
</dbReference>
<dbReference type="SMART" id="SM00132">
    <property type="entry name" value="LIM"/>
    <property type="match status" value="5"/>
</dbReference>
<dbReference type="SUPFAM" id="SSF57716">
    <property type="entry name" value="Glucocorticoid receptor-like (DNA-binding domain)"/>
    <property type="match status" value="6"/>
</dbReference>
<dbReference type="PROSITE" id="PS00478">
    <property type="entry name" value="LIM_DOMAIN_1"/>
    <property type="match status" value="4"/>
</dbReference>
<dbReference type="PROSITE" id="PS50023">
    <property type="entry name" value="LIM_DOMAIN_2"/>
    <property type="match status" value="5"/>
</dbReference>
<name>LIMS2_HUMAN</name>
<reference key="1">
    <citation type="journal article" date="2002" name="J. Biol. Chem.">
        <title>Characterization of PINCH-2, a new focal adhesion protein that regulates the PINCH-1-ILK interaction, cell spreading, and migration.</title>
        <authorList>
            <person name="Zhang Y."/>
            <person name="Chen K."/>
            <person name="Guo L."/>
            <person name="Wu C."/>
        </authorList>
    </citation>
    <scope>NUCLEOTIDE SEQUENCE [MRNA] (ISOFORM 1)</scope>
    <scope>FUNCTION</scope>
    <scope>SUBCELLULAR LOCATION</scope>
    <scope>INTERACTION WITH ILK</scope>
</reference>
<reference key="2">
    <citation type="submission" date="2002-06" db="EMBL/GenBank/DDBJ databases">
        <title>Cloning and characterization a novel human gene LIMS2.</title>
        <authorList>
            <person name="Zeng W."/>
            <person name="Zhu Y."/>
            <person name="Jiao W."/>
            <person name="Yuan W."/>
            <person name="Wu X."/>
        </authorList>
    </citation>
    <scope>NUCLEOTIDE SEQUENCE [MRNA] (ISOFORM 3)</scope>
</reference>
<reference key="3">
    <citation type="submission" date="2002-07" db="EMBL/GenBank/DDBJ databases">
        <authorList>
            <person name="Ding P."/>
            <person name="Han W."/>
            <person name="Cheng Y."/>
            <person name="Qiu X."/>
            <person name="Song Q."/>
            <person name="Zhang Y."/>
            <person name="Ma D."/>
        </authorList>
    </citation>
    <scope>NUCLEOTIDE SEQUENCE [MRNA] (ISOFORMS 1; 2; 3 AND 4)</scope>
    <source>
        <tissue>Brain</tissue>
        <tissue>Lung</tissue>
    </source>
</reference>
<reference key="4">
    <citation type="submission" date="2003-04" db="EMBL/GenBank/DDBJ databases">
        <title>Full-length cDNA libraries and normalization.</title>
        <authorList>
            <person name="Li W.B."/>
            <person name="Gruber C."/>
            <person name="Jessee J."/>
            <person name="Polayes D."/>
        </authorList>
    </citation>
    <scope>NUCLEOTIDE SEQUENCE [LARGE SCALE MRNA] (ISOFORM 4)</scope>
    <source>
        <tissue>Placenta</tissue>
    </source>
</reference>
<reference key="5">
    <citation type="journal article" date="2004" name="Nat. Genet.">
        <title>Complete sequencing and characterization of 21,243 full-length human cDNAs.</title>
        <authorList>
            <person name="Ota T."/>
            <person name="Suzuki Y."/>
            <person name="Nishikawa T."/>
            <person name="Otsuki T."/>
            <person name="Sugiyama T."/>
            <person name="Irie R."/>
            <person name="Wakamatsu A."/>
            <person name="Hayashi K."/>
            <person name="Sato H."/>
            <person name="Nagai K."/>
            <person name="Kimura K."/>
            <person name="Makita H."/>
            <person name="Sekine M."/>
            <person name="Obayashi M."/>
            <person name="Nishi T."/>
            <person name="Shibahara T."/>
            <person name="Tanaka T."/>
            <person name="Ishii S."/>
            <person name="Yamamoto J."/>
            <person name="Saito K."/>
            <person name="Kawai Y."/>
            <person name="Isono Y."/>
            <person name="Nakamura Y."/>
            <person name="Nagahari K."/>
            <person name="Murakami K."/>
            <person name="Yasuda T."/>
            <person name="Iwayanagi T."/>
            <person name="Wagatsuma M."/>
            <person name="Shiratori A."/>
            <person name="Sudo H."/>
            <person name="Hosoiri T."/>
            <person name="Kaku Y."/>
            <person name="Kodaira H."/>
            <person name="Kondo H."/>
            <person name="Sugawara M."/>
            <person name="Takahashi M."/>
            <person name="Kanda K."/>
            <person name="Yokoi T."/>
            <person name="Furuya T."/>
            <person name="Kikkawa E."/>
            <person name="Omura Y."/>
            <person name="Abe K."/>
            <person name="Kamihara K."/>
            <person name="Katsuta N."/>
            <person name="Sato K."/>
            <person name="Tanikawa M."/>
            <person name="Yamazaki M."/>
            <person name="Ninomiya K."/>
            <person name="Ishibashi T."/>
            <person name="Yamashita H."/>
            <person name="Murakawa K."/>
            <person name="Fujimori K."/>
            <person name="Tanai H."/>
            <person name="Kimata M."/>
            <person name="Watanabe M."/>
            <person name="Hiraoka S."/>
            <person name="Chiba Y."/>
            <person name="Ishida S."/>
            <person name="Ono Y."/>
            <person name="Takiguchi S."/>
            <person name="Watanabe S."/>
            <person name="Yosida M."/>
            <person name="Hotuta T."/>
            <person name="Kusano J."/>
            <person name="Kanehori K."/>
            <person name="Takahashi-Fujii A."/>
            <person name="Hara H."/>
            <person name="Tanase T.-O."/>
            <person name="Nomura Y."/>
            <person name="Togiya S."/>
            <person name="Komai F."/>
            <person name="Hara R."/>
            <person name="Takeuchi K."/>
            <person name="Arita M."/>
            <person name="Imose N."/>
            <person name="Musashino K."/>
            <person name="Yuuki H."/>
            <person name="Oshima A."/>
            <person name="Sasaki N."/>
            <person name="Aotsuka S."/>
            <person name="Yoshikawa Y."/>
            <person name="Matsunawa H."/>
            <person name="Ichihara T."/>
            <person name="Shiohata N."/>
            <person name="Sano S."/>
            <person name="Moriya S."/>
            <person name="Momiyama H."/>
            <person name="Satoh N."/>
            <person name="Takami S."/>
            <person name="Terashima Y."/>
            <person name="Suzuki O."/>
            <person name="Nakagawa S."/>
            <person name="Senoh A."/>
            <person name="Mizoguchi H."/>
            <person name="Goto Y."/>
            <person name="Shimizu F."/>
            <person name="Wakebe H."/>
            <person name="Hishigaki H."/>
            <person name="Watanabe T."/>
            <person name="Sugiyama A."/>
            <person name="Takemoto M."/>
            <person name="Kawakami B."/>
            <person name="Yamazaki M."/>
            <person name="Watanabe K."/>
            <person name="Kumagai A."/>
            <person name="Itakura S."/>
            <person name="Fukuzumi Y."/>
            <person name="Fujimori Y."/>
            <person name="Komiyama M."/>
            <person name="Tashiro H."/>
            <person name="Tanigami A."/>
            <person name="Fujiwara T."/>
            <person name="Ono T."/>
            <person name="Yamada K."/>
            <person name="Fujii Y."/>
            <person name="Ozaki K."/>
            <person name="Hirao M."/>
            <person name="Ohmori Y."/>
            <person name="Kawabata A."/>
            <person name="Hikiji T."/>
            <person name="Kobatake N."/>
            <person name="Inagaki H."/>
            <person name="Ikema Y."/>
            <person name="Okamoto S."/>
            <person name="Okitani R."/>
            <person name="Kawakami T."/>
            <person name="Noguchi S."/>
            <person name="Itoh T."/>
            <person name="Shigeta K."/>
            <person name="Senba T."/>
            <person name="Matsumura K."/>
            <person name="Nakajima Y."/>
            <person name="Mizuno T."/>
            <person name="Morinaga M."/>
            <person name="Sasaki M."/>
            <person name="Togashi T."/>
            <person name="Oyama M."/>
            <person name="Hata H."/>
            <person name="Watanabe M."/>
            <person name="Komatsu T."/>
            <person name="Mizushima-Sugano J."/>
            <person name="Satoh T."/>
            <person name="Shirai Y."/>
            <person name="Takahashi Y."/>
            <person name="Nakagawa K."/>
            <person name="Okumura K."/>
            <person name="Nagase T."/>
            <person name="Nomura N."/>
            <person name="Kikuchi H."/>
            <person name="Masuho Y."/>
            <person name="Yamashita R."/>
            <person name="Nakai K."/>
            <person name="Yada T."/>
            <person name="Nakamura Y."/>
            <person name="Ohara O."/>
            <person name="Isogai T."/>
            <person name="Sugano S."/>
        </authorList>
    </citation>
    <scope>NUCLEOTIDE SEQUENCE [LARGE SCALE MRNA] (ISOFORMS 1 AND 5)</scope>
    <source>
        <tissue>Brain</tissue>
        <tissue>Mammary gland</tissue>
    </source>
</reference>
<reference key="6">
    <citation type="journal article" date="2005" name="Nature">
        <title>Generation and annotation of the DNA sequences of human chromosomes 2 and 4.</title>
        <authorList>
            <person name="Hillier L.W."/>
            <person name="Graves T.A."/>
            <person name="Fulton R.S."/>
            <person name="Fulton L.A."/>
            <person name="Pepin K.H."/>
            <person name="Minx P."/>
            <person name="Wagner-McPherson C."/>
            <person name="Layman D."/>
            <person name="Wylie K."/>
            <person name="Sekhon M."/>
            <person name="Becker M.C."/>
            <person name="Fewell G.A."/>
            <person name="Delehaunty K.D."/>
            <person name="Miner T.L."/>
            <person name="Nash W.E."/>
            <person name="Kremitzki C."/>
            <person name="Oddy L."/>
            <person name="Du H."/>
            <person name="Sun H."/>
            <person name="Bradshaw-Cordum H."/>
            <person name="Ali J."/>
            <person name="Carter J."/>
            <person name="Cordes M."/>
            <person name="Harris A."/>
            <person name="Isak A."/>
            <person name="van Brunt A."/>
            <person name="Nguyen C."/>
            <person name="Du F."/>
            <person name="Courtney L."/>
            <person name="Kalicki J."/>
            <person name="Ozersky P."/>
            <person name="Abbott S."/>
            <person name="Armstrong J."/>
            <person name="Belter E.A."/>
            <person name="Caruso L."/>
            <person name="Cedroni M."/>
            <person name="Cotton M."/>
            <person name="Davidson T."/>
            <person name="Desai A."/>
            <person name="Elliott G."/>
            <person name="Erb T."/>
            <person name="Fronick C."/>
            <person name="Gaige T."/>
            <person name="Haakenson W."/>
            <person name="Haglund K."/>
            <person name="Holmes A."/>
            <person name="Harkins R."/>
            <person name="Kim K."/>
            <person name="Kruchowski S.S."/>
            <person name="Strong C.M."/>
            <person name="Grewal N."/>
            <person name="Goyea E."/>
            <person name="Hou S."/>
            <person name="Levy A."/>
            <person name="Martinka S."/>
            <person name="Mead K."/>
            <person name="McLellan M.D."/>
            <person name="Meyer R."/>
            <person name="Randall-Maher J."/>
            <person name="Tomlinson C."/>
            <person name="Dauphin-Kohlberg S."/>
            <person name="Kozlowicz-Reilly A."/>
            <person name="Shah N."/>
            <person name="Swearengen-Shahid S."/>
            <person name="Snider J."/>
            <person name="Strong J.T."/>
            <person name="Thompson J."/>
            <person name="Yoakum M."/>
            <person name="Leonard S."/>
            <person name="Pearman C."/>
            <person name="Trani L."/>
            <person name="Radionenko M."/>
            <person name="Waligorski J.E."/>
            <person name="Wang C."/>
            <person name="Rock S.M."/>
            <person name="Tin-Wollam A.-M."/>
            <person name="Maupin R."/>
            <person name="Latreille P."/>
            <person name="Wendl M.C."/>
            <person name="Yang S.-P."/>
            <person name="Pohl C."/>
            <person name="Wallis J.W."/>
            <person name="Spieth J."/>
            <person name="Bieri T.A."/>
            <person name="Berkowicz N."/>
            <person name="Nelson J.O."/>
            <person name="Osborne J."/>
            <person name="Ding L."/>
            <person name="Meyer R."/>
            <person name="Sabo A."/>
            <person name="Shotland Y."/>
            <person name="Sinha P."/>
            <person name="Wohldmann P.E."/>
            <person name="Cook L.L."/>
            <person name="Hickenbotham M.T."/>
            <person name="Eldred J."/>
            <person name="Williams D."/>
            <person name="Jones T.A."/>
            <person name="She X."/>
            <person name="Ciccarelli F.D."/>
            <person name="Izaurralde E."/>
            <person name="Taylor J."/>
            <person name="Schmutz J."/>
            <person name="Myers R.M."/>
            <person name="Cox D.R."/>
            <person name="Huang X."/>
            <person name="McPherson J.D."/>
            <person name="Mardis E.R."/>
            <person name="Clifton S.W."/>
            <person name="Warren W.C."/>
            <person name="Chinwalla A.T."/>
            <person name="Eddy S.R."/>
            <person name="Marra M.A."/>
            <person name="Ovcharenko I."/>
            <person name="Furey T.S."/>
            <person name="Miller W."/>
            <person name="Eichler E.E."/>
            <person name="Bork P."/>
            <person name="Suyama M."/>
            <person name="Torrents D."/>
            <person name="Waterston R.H."/>
            <person name="Wilson R.K."/>
        </authorList>
    </citation>
    <scope>NUCLEOTIDE SEQUENCE [LARGE SCALE GENOMIC DNA]</scope>
</reference>
<reference key="7">
    <citation type="journal article" date="2004" name="Genome Res.">
        <title>The status, quality, and expansion of the NIH full-length cDNA project: the Mammalian Gene Collection (MGC).</title>
        <authorList>
            <consortium name="The MGC Project Team"/>
        </authorList>
    </citation>
    <scope>NUCLEOTIDE SEQUENCE [LARGE SCALE MRNA] (ISOFORM 1)</scope>
    <source>
        <tissue>PNS</tissue>
    </source>
</reference>
<reference key="8">
    <citation type="journal article" date="2008" name="Proc. Natl. Acad. Sci. U.S.A.">
        <title>A quantitative atlas of mitotic phosphorylation.</title>
        <authorList>
            <person name="Dephoure N."/>
            <person name="Zhou C."/>
            <person name="Villen J."/>
            <person name="Beausoleil S.A."/>
            <person name="Bakalarski C.E."/>
            <person name="Elledge S.J."/>
            <person name="Gygi S.P."/>
        </authorList>
    </citation>
    <scope>PHOSPHORYLATION [LARGE SCALE ANALYSIS] AT THR-327 AND SER-328</scope>
    <scope>IDENTIFICATION BY MASS SPECTROMETRY [LARGE SCALE ANALYSIS]</scope>
    <source>
        <tissue>Cervix carcinoma</tissue>
    </source>
</reference>
<reference key="9">
    <citation type="journal article" date="2012" name="Proc. Natl. Acad. Sci. U.S.A.">
        <title>N-terminal acetylome analyses and functional insights of the N-terminal acetyltransferase NatB.</title>
        <authorList>
            <person name="Van Damme P."/>
            <person name="Lasa M."/>
            <person name="Polevoda B."/>
            <person name="Gazquez C."/>
            <person name="Elosegui-Artola A."/>
            <person name="Kim D.S."/>
            <person name="De Juan-Pardo E."/>
            <person name="Demeyer K."/>
            <person name="Hole K."/>
            <person name="Larrea E."/>
            <person name="Timmerman E."/>
            <person name="Prieto J."/>
            <person name="Arnesen T."/>
            <person name="Sherman F."/>
            <person name="Gevaert K."/>
            <person name="Aldabe R."/>
        </authorList>
    </citation>
    <scope>IDENTIFICATION BY MASS SPECTROMETRY [LARGE SCALE ANALYSIS]</scope>
</reference>
<reference key="10">
    <citation type="journal article" date="2014" name="J. Proteomics">
        <title>An enzyme assisted RP-RPLC approach for in-depth analysis of human liver phosphoproteome.</title>
        <authorList>
            <person name="Bian Y."/>
            <person name="Song C."/>
            <person name="Cheng K."/>
            <person name="Dong M."/>
            <person name="Wang F."/>
            <person name="Huang J."/>
            <person name="Sun D."/>
            <person name="Wang L."/>
            <person name="Ye M."/>
            <person name="Zou H."/>
        </authorList>
    </citation>
    <scope>PHOSPHORYLATION [LARGE SCALE ANALYSIS] AT SER-22 (ISOFORM 2)</scope>
    <scope>IDENTIFICATION BY MASS SPECTROMETRY [LARGE SCALE ANALYSIS]</scope>
    <source>
        <tissue>Liver</tissue>
    </source>
</reference>
<reference key="11">
    <citation type="journal article" date="2010" name="J. Struct. Biol.">
        <title>Structural basis of competition between PINCH1 and PINCH2 for binding to the ankyrin repeat domain of integrin-linked kinase.</title>
        <authorList>
            <person name="Chiswell B.P."/>
            <person name="Stiegler A.L."/>
            <person name="Razinia Z."/>
            <person name="Nalibotski E."/>
            <person name="Boggon T.J."/>
            <person name="Calderwood D.A."/>
        </authorList>
    </citation>
    <scope>X-RAY CRYSTALLOGRAPHY (1.9 ANGSTROMS) OF 11-73 IN COMPLEX WITH ILK</scope>
    <scope>SUBUNIT</scope>
</reference>
<reference key="12">
    <citation type="journal article" date="2015" name="Clin. Genet.">
        <title>LIMS2 mutations are associated with a novel muscular dystrophy, severe cardiomyopathy and triangular tongues.</title>
        <authorList>
            <consortium name="FORGE Canada Consortium"/>
            <person name="Chardon J.W."/>
            <person name="Smith A.C."/>
            <person name="Woulfe J."/>
            <person name="Pena E."/>
            <person name="Rakhra K."/>
            <person name="Dennie C."/>
            <person name="Beaulieu C."/>
            <person name="Huang L."/>
            <person name="Schwartzentruber J."/>
            <person name="Hawkins C."/>
            <person name="Harms M.B."/>
            <person name="Dojeiji S."/>
            <person name="Zhang M."/>
            <person name="Majewski J."/>
            <person name="Bulman D.E."/>
            <person name="Boycott K.M."/>
            <person name="Dyment D.A."/>
        </authorList>
    </citation>
    <scope>VARIANTS MDRCMTT LYS-92; LEU-97 AND PRO-323</scope>
</reference>
<organism>
    <name type="scientific">Homo sapiens</name>
    <name type="common">Human</name>
    <dbReference type="NCBI Taxonomy" id="9606"/>
    <lineage>
        <taxon>Eukaryota</taxon>
        <taxon>Metazoa</taxon>
        <taxon>Chordata</taxon>
        <taxon>Craniata</taxon>
        <taxon>Vertebrata</taxon>
        <taxon>Euteleostomi</taxon>
        <taxon>Mammalia</taxon>
        <taxon>Eutheria</taxon>
        <taxon>Euarchontoglires</taxon>
        <taxon>Primates</taxon>
        <taxon>Haplorrhini</taxon>
        <taxon>Catarrhini</taxon>
        <taxon>Hominidae</taxon>
        <taxon>Homo</taxon>
    </lineage>
</organism>
<comment type="function">
    <text evidence="3">Adapter protein in a cytoplasmic complex linking beta-integrins to the actin cytoskeleton, bridges the complex to cell surface receptor tyrosine kinases and growth factor receptors. Plays a role in modulating cell spreading and migration.</text>
</comment>
<comment type="subunit">
    <text evidence="1 3 4">Interacts with TGFB1I1 (By similarity). Interacts with integrin-linked protein kinase 1 (ILK) via the first LIM domain, and in competition with LIMS1. Part of the heterotrimeric IPP complex composed of integrin-linked kinase (ILK), LIMS1 or LIMS2, and PARVA.</text>
</comment>
<comment type="interaction">
    <interactant intactId="EBI-22000977">
        <id>Q7Z4I7-4</id>
    </interactant>
    <interactant intactId="EBI-5235340">
        <id>Q7Z699</id>
        <label>SPRED1</label>
    </interactant>
    <organismsDiffer>false</organismsDiffer>
    <experiments>3</experiments>
</comment>
<comment type="interaction">
    <interactant intactId="EBI-10257651">
        <id>Q7Z4I7-5</id>
    </interactant>
    <interactant intactId="EBI-739580">
        <id>Q13137</id>
        <label>CALCOCO2</label>
    </interactant>
    <organismsDiffer>false</organismsDiffer>
    <experiments>3</experiments>
</comment>
<comment type="interaction">
    <interactant intactId="EBI-10257651">
        <id>Q7Z4I7-5</id>
    </interactant>
    <interactant intactId="EBI-618309">
        <id>Q08379</id>
        <label>GOLGA2</label>
    </interactant>
    <organismsDiffer>false</organismsDiffer>
    <experiments>3</experiments>
</comment>
<comment type="interaction">
    <interactant intactId="EBI-10257651">
        <id>Q7Z4I7-5</id>
    </interactant>
    <interactant intactId="EBI-10171697">
        <id>Q6A162</id>
        <label>KRT40</label>
    </interactant>
    <organismsDiffer>false</organismsDiffer>
    <experiments>3</experiments>
</comment>
<comment type="interaction">
    <interactant intactId="EBI-10257651">
        <id>Q7Z4I7-5</id>
    </interactant>
    <interactant intactId="EBI-10172150">
        <id>P60370</id>
        <label>KRTAP10-5</label>
    </interactant>
    <organismsDiffer>false</organismsDiffer>
    <experiments>3</experiments>
</comment>
<comment type="interaction">
    <interactant intactId="EBI-10257651">
        <id>Q7Z4I7-5</id>
    </interactant>
    <interactant intactId="EBI-10172290">
        <id>P60409</id>
        <label>KRTAP10-7</label>
    </interactant>
    <organismsDiffer>false</organismsDiffer>
    <experiments>3</experiments>
</comment>
<comment type="interaction">
    <interactant intactId="EBI-10257651">
        <id>Q7Z4I7-5</id>
    </interactant>
    <interactant intactId="EBI-724076">
        <id>Q99750</id>
        <label>MDFI</label>
    </interactant>
    <organismsDiffer>false</organismsDiffer>
    <experiments>3</experiments>
</comment>
<comment type="interaction">
    <interactant intactId="EBI-10257651">
        <id>Q7Z4I7-5</id>
    </interactant>
    <interactant intactId="EBI-742948">
        <id>Q5JR59</id>
        <label>MTUS2</label>
    </interactant>
    <organismsDiffer>false</organismsDiffer>
    <experiments>3</experiments>
</comment>
<comment type="interaction">
    <interactant intactId="EBI-10257651">
        <id>Q7Z4I7-5</id>
    </interactant>
    <interactant intactId="EBI-945833">
        <id>Q7Z3S9</id>
        <label>NOTCH2NLA</label>
    </interactant>
    <organismsDiffer>false</organismsDiffer>
    <experiments>3</experiments>
</comment>
<comment type="interaction">
    <interactant intactId="EBI-10257651">
        <id>Q7Z4I7-5</id>
    </interactant>
    <interactant intactId="EBI-947779">
        <id>Q96PM5</id>
        <label>RCHY1</label>
    </interactant>
    <organismsDiffer>false</organismsDiffer>
    <experiments>3</experiments>
</comment>
<comment type="subcellular location">
    <subcellularLocation>
        <location evidence="10">Nucleus</location>
    </subcellularLocation>
    <subcellularLocation>
        <location evidence="3">Cell junction</location>
        <location evidence="3">Focal adhesion</location>
    </subcellularLocation>
    <subcellularLocation>
        <location evidence="3">Cell membrane</location>
        <topology evidence="3">Peripheral membrane protein</topology>
        <orientation evidence="3">Cytoplasmic side</orientation>
    </subcellularLocation>
</comment>
<comment type="alternative products">
    <event type="alternative splicing"/>
    <isoform>
        <id>Q7Z4I7-1</id>
        <name>1</name>
        <name>LIM-like protein 2B</name>
        <sequence type="displayed"/>
    </isoform>
    <isoform>
        <id>Q7Z4I7-2</id>
        <name>2</name>
        <name>LIM-like protein 2A</name>
        <sequence type="described" ref="VSP_021917"/>
    </isoform>
    <isoform>
        <id>Q7Z4I7-3</id>
        <name>3</name>
        <name>LIM-like protein 2C</name>
        <sequence type="described" ref="VSP_021916"/>
    </isoform>
    <isoform>
        <id>Q7Z4I7-4</id>
        <name>4</name>
        <sequence type="described" ref="VSP_045539"/>
    </isoform>
    <isoform>
        <id>Q7Z4I7-5</id>
        <name>5</name>
        <sequence type="described" ref="VSP_046078"/>
    </isoform>
</comment>
<comment type="disease" evidence="5">
    <disease id="DI-04660">
        <name>Muscular dystrophy, autosomal recessive, with cardiomyopathy and triangular tongue</name>
        <acronym>MDRCMTT</acronym>
        <description>An autosomal recessive muscular dystrophy characterized by childhood-onset of muscle weakness progressing to a severe quadriparesis. Additionally, patients have biventricular cardiac dysfunction due to dilated cardiomyopathy, and macroglossia with a small tip resulting in a triangular tongue.</description>
        <dbReference type="MIM" id="616827"/>
    </disease>
    <text>The disease may be caused by variants affecting the gene represented in this entry.</text>
</comment>
<comment type="sequence caution" evidence="10">
    <conflict type="frameshift">
        <sequence resource="EMBL-CDS" id="AAM77350"/>
    </conflict>
</comment>
<feature type="chain" id="PRO_0000266011" description="LIM and senescent cell antigen-like-containing domain protein 2">
    <location>
        <begin position="1"/>
        <end position="341"/>
    </location>
</feature>
<feature type="domain" description="LIM zinc-binding 1" evidence="2">
    <location>
        <begin position="13"/>
        <end position="74"/>
    </location>
</feature>
<feature type="domain" description="LIM zinc-binding 2" evidence="2">
    <location>
        <begin position="76"/>
        <end position="133"/>
    </location>
</feature>
<feature type="domain" description="LIM zinc-binding 3" evidence="2">
    <location>
        <begin position="138"/>
        <end position="195"/>
    </location>
</feature>
<feature type="domain" description="LIM zinc-binding 4" evidence="2">
    <location>
        <begin position="196"/>
        <end position="255"/>
    </location>
</feature>
<feature type="domain" description="LIM zinc-binding 5" evidence="2">
    <location>
        <begin position="256"/>
        <end position="315"/>
    </location>
</feature>
<feature type="modified residue" description="Phosphothreonine" evidence="11">
    <location>
        <position position="327"/>
    </location>
</feature>
<feature type="modified residue" description="Phosphoserine" evidence="11">
    <location>
        <position position="328"/>
    </location>
</feature>
<feature type="splice variant" id="VSP_045539" description="In isoform 4." evidence="8 9">
    <location>
        <begin position="1"/>
        <end position="152"/>
    </location>
</feature>
<feature type="splice variant" id="VSP_021916" description="In isoform 3." evidence="7 8">
    <location>
        <begin position="1"/>
        <end position="5"/>
    </location>
</feature>
<feature type="splice variant" id="VSP_021917" description="In isoform 2." evidence="8">
    <original>MTGS</original>
    <variation>MAARLGALAASGLYRRRQHRQSPPPATG</variation>
    <location>
        <begin position="1"/>
        <end position="4"/>
    </location>
</feature>
<feature type="splice variant" id="VSP_046078" description="In isoform 5." evidence="6">
    <original>G</original>
    <variation>GRKRKWGETGTGSGAAPAAALRW</variation>
    <location>
        <position position="3"/>
    </location>
</feature>
<feature type="sequence variant" id="VAR_076527" description="In MDRCMTT; uncertain significance; dbSNP:rs754385302." evidence="5">
    <original>N</original>
    <variation>K</variation>
    <location>
        <position position="92"/>
    </location>
</feature>
<feature type="sequence variant" id="VAR_076528" description="In MDRCMTT; uncertain significance; dbSNP:rs768056213." evidence="5">
    <original>P</original>
    <variation>L</variation>
    <location>
        <position position="97"/>
    </location>
</feature>
<feature type="sequence variant" id="VAR_076529" description="In MDRCMTT; uncertain significance; dbSNP:rs869025562." evidence="5">
    <original>L</original>
    <variation>P</variation>
    <location>
        <position position="323"/>
    </location>
</feature>
<feature type="sequence conflict" description="In Ref. 5; BAG60013." evidence="10" ref="5">
    <original>D</original>
    <variation>G</variation>
    <location>
        <position position="111"/>
    </location>
</feature>
<feature type="sequence conflict" description="In Ref. 1; AAM97589 and 6; BAB14047." evidence="10" ref="1 6">
    <original>N</original>
    <variation>D</variation>
    <location>
        <position position="294"/>
    </location>
</feature>
<feature type="turn" evidence="13">
    <location>
        <begin position="16"/>
        <end position="18"/>
    </location>
</feature>
<feature type="strand" evidence="13">
    <location>
        <begin position="29"/>
        <end position="31"/>
    </location>
</feature>
<feature type="strand" evidence="13">
    <location>
        <begin position="34"/>
        <end position="36"/>
    </location>
</feature>
<feature type="turn" evidence="13">
    <location>
        <begin position="38"/>
        <end position="40"/>
    </location>
</feature>
<feature type="turn" evidence="13">
    <location>
        <begin position="44"/>
        <end position="46"/>
    </location>
</feature>
<feature type="helix" evidence="13">
    <location>
        <begin position="51"/>
        <end position="53"/>
    </location>
</feature>
<feature type="strand" evidence="13">
    <location>
        <begin position="56"/>
        <end position="58"/>
    </location>
</feature>
<feature type="strand" evidence="13">
    <location>
        <begin position="61"/>
        <end position="63"/>
    </location>
</feature>
<feature type="helix" evidence="13">
    <location>
        <begin position="65"/>
        <end position="71"/>
    </location>
</feature>
<feature type="modified residue" description="Phosphoserine" evidence="12">
    <location sequence="Q7Z4I7-2">
        <position position="22"/>
    </location>
</feature>
<keyword id="KW-0002">3D-structure</keyword>
<keyword id="KW-0025">Alternative splicing</keyword>
<keyword id="KW-0965">Cell junction</keyword>
<keyword id="KW-1003">Cell membrane</keyword>
<keyword id="KW-0225">Disease variant</keyword>
<keyword id="KW-0440">LIM domain</keyword>
<keyword id="KW-0947">Limb-girdle muscular dystrophy</keyword>
<keyword id="KW-0472">Membrane</keyword>
<keyword id="KW-0479">Metal-binding</keyword>
<keyword id="KW-0539">Nucleus</keyword>
<keyword id="KW-0597">Phosphoprotein</keyword>
<keyword id="KW-1267">Proteomics identification</keyword>
<keyword id="KW-1185">Reference proteome</keyword>
<keyword id="KW-0677">Repeat</keyword>
<keyword id="KW-0862">Zinc</keyword>
<evidence type="ECO:0000250" key="1"/>
<evidence type="ECO:0000255" key="2">
    <source>
        <dbReference type="PROSITE-ProRule" id="PRU00125"/>
    </source>
</evidence>
<evidence type="ECO:0000269" key="3">
    <source>
    </source>
</evidence>
<evidence type="ECO:0000269" key="4">
    <source>
    </source>
</evidence>
<evidence type="ECO:0000269" key="5">
    <source>
    </source>
</evidence>
<evidence type="ECO:0000303" key="6">
    <source>
    </source>
</evidence>
<evidence type="ECO:0000303" key="7">
    <source ref="2"/>
</evidence>
<evidence type="ECO:0000303" key="8">
    <source ref="3"/>
</evidence>
<evidence type="ECO:0000303" key="9">
    <source ref="4"/>
</evidence>
<evidence type="ECO:0000305" key="10"/>
<evidence type="ECO:0007744" key="11">
    <source>
    </source>
</evidence>
<evidence type="ECO:0007744" key="12">
    <source>
    </source>
</evidence>
<evidence type="ECO:0007829" key="13">
    <source>
        <dbReference type="PDB" id="3IXE"/>
    </source>
</evidence>
<accession>Q7Z4I7</accession>
<accession>A6NLH0</accession>
<accession>B4DMV1</accession>
<accession>F5H6E6</accession>
<accession>Q7Z4I2</accession>
<accession>Q7Z4I6</accession>
<accession>Q7Z4I8</accession>
<accession>Q8NFE7</accession>
<accession>Q9HA13</accession>